<name>RS13_IDILO</name>
<keyword id="KW-1185">Reference proteome</keyword>
<keyword id="KW-0687">Ribonucleoprotein</keyword>
<keyword id="KW-0689">Ribosomal protein</keyword>
<keyword id="KW-0694">RNA-binding</keyword>
<keyword id="KW-0699">rRNA-binding</keyword>
<keyword id="KW-0820">tRNA-binding</keyword>
<dbReference type="EMBL" id="AE017340">
    <property type="protein sequence ID" value="AAV82726.1"/>
    <property type="molecule type" value="Genomic_DNA"/>
</dbReference>
<dbReference type="RefSeq" id="WP_011235126.1">
    <property type="nucleotide sequence ID" value="NC_006512.1"/>
</dbReference>
<dbReference type="SMR" id="Q5QXV5"/>
<dbReference type="STRING" id="283942.IL1894"/>
<dbReference type="GeneID" id="78252614"/>
<dbReference type="KEGG" id="ilo:IL1894"/>
<dbReference type="eggNOG" id="COG0099">
    <property type="taxonomic scope" value="Bacteria"/>
</dbReference>
<dbReference type="HOGENOM" id="CLU_103849_1_2_6"/>
<dbReference type="OrthoDB" id="9803610at2"/>
<dbReference type="Proteomes" id="UP000001171">
    <property type="component" value="Chromosome"/>
</dbReference>
<dbReference type="GO" id="GO:0005829">
    <property type="term" value="C:cytosol"/>
    <property type="evidence" value="ECO:0007669"/>
    <property type="project" value="TreeGrafter"/>
</dbReference>
<dbReference type="GO" id="GO:0015935">
    <property type="term" value="C:small ribosomal subunit"/>
    <property type="evidence" value="ECO:0007669"/>
    <property type="project" value="TreeGrafter"/>
</dbReference>
<dbReference type="GO" id="GO:0019843">
    <property type="term" value="F:rRNA binding"/>
    <property type="evidence" value="ECO:0007669"/>
    <property type="project" value="UniProtKB-UniRule"/>
</dbReference>
<dbReference type="GO" id="GO:0003735">
    <property type="term" value="F:structural constituent of ribosome"/>
    <property type="evidence" value="ECO:0007669"/>
    <property type="project" value="InterPro"/>
</dbReference>
<dbReference type="GO" id="GO:0000049">
    <property type="term" value="F:tRNA binding"/>
    <property type="evidence" value="ECO:0007669"/>
    <property type="project" value="UniProtKB-UniRule"/>
</dbReference>
<dbReference type="GO" id="GO:0006412">
    <property type="term" value="P:translation"/>
    <property type="evidence" value="ECO:0007669"/>
    <property type="project" value="UniProtKB-UniRule"/>
</dbReference>
<dbReference type="FunFam" id="1.10.8.50:FF:000001">
    <property type="entry name" value="30S ribosomal protein S13"/>
    <property type="match status" value="1"/>
</dbReference>
<dbReference type="FunFam" id="4.10.910.10:FF:000001">
    <property type="entry name" value="30S ribosomal protein S13"/>
    <property type="match status" value="1"/>
</dbReference>
<dbReference type="Gene3D" id="1.10.8.50">
    <property type="match status" value="1"/>
</dbReference>
<dbReference type="Gene3D" id="4.10.910.10">
    <property type="entry name" value="30s ribosomal protein s13, domain 2"/>
    <property type="match status" value="1"/>
</dbReference>
<dbReference type="HAMAP" id="MF_01315">
    <property type="entry name" value="Ribosomal_uS13"/>
    <property type="match status" value="1"/>
</dbReference>
<dbReference type="InterPro" id="IPR027437">
    <property type="entry name" value="Rbsml_uS13_C"/>
</dbReference>
<dbReference type="InterPro" id="IPR001892">
    <property type="entry name" value="Ribosomal_uS13"/>
</dbReference>
<dbReference type="InterPro" id="IPR010979">
    <property type="entry name" value="Ribosomal_uS13-like_H2TH"/>
</dbReference>
<dbReference type="InterPro" id="IPR019980">
    <property type="entry name" value="Ribosomal_uS13_bac-type"/>
</dbReference>
<dbReference type="InterPro" id="IPR018269">
    <property type="entry name" value="Ribosomal_uS13_CS"/>
</dbReference>
<dbReference type="NCBIfam" id="TIGR03631">
    <property type="entry name" value="uS13_bact"/>
    <property type="match status" value="1"/>
</dbReference>
<dbReference type="PANTHER" id="PTHR10871">
    <property type="entry name" value="30S RIBOSOMAL PROTEIN S13/40S RIBOSOMAL PROTEIN S18"/>
    <property type="match status" value="1"/>
</dbReference>
<dbReference type="PANTHER" id="PTHR10871:SF1">
    <property type="entry name" value="SMALL RIBOSOMAL SUBUNIT PROTEIN US13M"/>
    <property type="match status" value="1"/>
</dbReference>
<dbReference type="Pfam" id="PF00416">
    <property type="entry name" value="Ribosomal_S13"/>
    <property type="match status" value="1"/>
</dbReference>
<dbReference type="PIRSF" id="PIRSF002134">
    <property type="entry name" value="Ribosomal_S13"/>
    <property type="match status" value="1"/>
</dbReference>
<dbReference type="SUPFAM" id="SSF46946">
    <property type="entry name" value="S13-like H2TH domain"/>
    <property type="match status" value="1"/>
</dbReference>
<dbReference type="PROSITE" id="PS00646">
    <property type="entry name" value="RIBOSOMAL_S13_1"/>
    <property type="match status" value="1"/>
</dbReference>
<dbReference type="PROSITE" id="PS50159">
    <property type="entry name" value="RIBOSOMAL_S13_2"/>
    <property type="match status" value="1"/>
</dbReference>
<gene>
    <name evidence="1" type="primary">rpsM</name>
    <name type="ordered locus">IL1894</name>
</gene>
<evidence type="ECO:0000255" key="1">
    <source>
        <dbReference type="HAMAP-Rule" id="MF_01315"/>
    </source>
</evidence>
<evidence type="ECO:0000256" key="2">
    <source>
        <dbReference type="SAM" id="MobiDB-lite"/>
    </source>
</evidence>
<evidence type="ECO:0000305" key="3"/>
<proteinExistence type="inferred from homology"/>
<comment type="function">
    <text evidence="1">Located at the top of the head of the 30S subunit, it contacts several helices of the 16S rRNA. In the 70S ribosome it contacts the 23S rRNA (bridge B1a) and protein L5 of the 50S subunit (bridge B1b), connecting the 2 subunits; these bridges are implicated in subunit movement. Contacts the tRNAs in the A and P-sites.</text>
</comment>
<comment type="subunit">
    <text evidence="1">Part of the 30S ribosomal subunit. Forms a loose heterodimer with protein S19. Forms two bridges to the 50S subunit in the 70S ribosome.</text>
</comment>
<comment type="similarity">
    <text evidence="1">Belongs to the universal ribosomal protein uS13 family.</text>
</comment>
<sequence>MARIAGINVPDNKHAVIALTAIYGVGRTRSQQILAATGIAEDTKIGSLSEDKLDALRDAVSKFAVEGDLRREVSMNIKRLMDLGCFRGLRHRRSLPLRGQRTKTNARTRKGPRKPIKK</sequence>
<organism>
    <name type="scientific">Idiomarina loihiensis (strain ATCC BAA-735 / DSM 15497 / L2-TR)</name>
    <dbReference type="NCBI Taxonomy" id="283942"/>
    <lineage>
        <taxon>Bacteria</taxon>
        <taxon>Pseudomonadati</taxon>
        <taxon>Pseudomonadota</taxon>
        <taxon>Gammaproteobacteria</taxon>
        <taxon>Alteromonadales</taxon>
        <taxon>Idiomarinaceae</taxon>
        <taxon>Idiomarina</taxon>
    </lineage>
</organism>
<accession>Q5QXV5</accession>
<feature type="chain" id="PRO_0000230515" description="Small ribosomal subunit protein uS13">
    <location>
        <begin position="1"/>
        <end position="118"/>
    </location>
</feature>
<feature type="region of interest" description="Disordered" evidence="2">
    <location>
        <begin position="94"/>
        <end position="118"/>
    </location>
</feature>
<reference key="1">
    <citation type="journal article" date="2004" name="Proc. Natl. Acad. Sci. U.S.A.">
        <title>Genome sequence of the deep-sea gamma-proteobacterium Idiomarina loihiensis reveals amino acid fermentation as a source of carbon and energy.</title>
        <authorList>
            <person name="Hou S."/>
            <person name="Saw J.H."/>
            <person name="Lee K.S."/>
            <person name="Freitas T.A."/>
            <person name="Belisle C."/>
            <person name="Kawarabayasi Y."/>
            <person name="Donachie S.P."/>
            <person name="Pikina A."/>
            <person name="Galperin M.Y."/>
            <person name="Koonin E.V."/>
            <person name="Makarova K.S."/>
            <person name="Omelchenko M.V."/>
            <person name="Sorokin A."/>
            <person name="Wolf Y.I."/>
            <person name="Li Q.X."/>
            <person name="Keum Y.S."/>
            <person name="Campbell S."/>
            <person name="Denery J."/>
            <person name="Aizawa S."/>
            <person name="Shibata S."/>
            <person name="Malahoff A."/>
            <person name="Alam M."/>
        </authorList>
    </citation>
    <scope>NUCLEOTIDE SEQUENCE [LARGE SCALE GENOMIC DNA]</scope>
    <source>
        <strain>ATCC BAA-735 / DSM 15497 / L2-TR</strain>
    </source>
</reference>
<protein>
    <recommendedName>
        <fullName evidence="1">Small ribosomal subunit protein uS13</fullName>
    </recommendedName>
    <alternativeName>
        <fullName evidence="3">30S ribosomal protein S13</fullName>
    </alternativeName>
</protein>